<accession>Q68EX9</accession>
<feature type="signal peptide" evidence="2">
    <location>
        <begin position="1"/>
        <end position="19"/>
    </location>
</feature>
<feature type="chain" id="PRO_0000280613" description="Chitinase domain-containing protein 1">
    <location>
        <begin position="20"/>
        <end position="393"/>
    </location>
</feature>
<feature type="domain" description="GH18" evidence="3">
    <location>
        <begin position="79"/>
        <end position="393"/>
    </location>
</feature>
<organism>
    <name type="scientific">Xenopus laevis</name>
    <name type="common">African clawed frog</name>
    <dbReference type="NCBI Taxonomy" id="8355"/>
    <lineage>
        <taxon>Eukaryota</taxon>
        <taxon>Metazoa</taxon>
        <taxon>Chordata</taxon>
        <taxon>Craniata</taxon>
        <taxon>Vertebrata</taxon>
        <taxon>Euteleostomi</taxon>
        <taxon>Amphibia</taxon>
        <taxon>Batrachia</taxon>
        <taxon>Anura</taxon>
        <taxon>Pipoidea</taxon>
        <taxon>Pipidae</taxon>
        <taxon>Xenopodinae</taxon>
        <taxon>Xenopus</taxon>
        <taxon>Xenopus</taxon>
    </lineage>
</organism>
<dbReference type="EMBL" id="BC080071">
    <property type="protein sequence ID" value="AAH80071.1"/>
    <property type="molecule type" value="mRNA"/>
</dbReference>
<dbReference type="RefSeq" id="NP_001087530.1">
    <property type="nucleotide sequence ID" value="NM_001094061.1"/>
</dbReference>
<dbReference type="RefSeq" id="XP_018112315.1">
    <property type="nucleotide sequence ID" value="XM_018256826.1"/>
</dbReference>
<dbReference type="SMR" id="Q68EX9"/>
<dbReference type="GeneID" id="447354"/>
<dbReference type="KEGG" id="xla:447354"/>
<dbReference type="AGR" id="Xenbase:XB-GENE-5752812"/>
<dbReference type="CTD" id="447354"/>
<dbReference type="Xenbase" id="XB-GENE-5752812">
    <property type="gene designation" value="chid1.L"/>
</dbReference>
<dbReference type="OMA" id="YSINERI"/>
<dbReference type="OrthoDB" id="10254444at2759"/>
<dbReference type="Proteomes" id="UP000186698">
    <property type="component" value="Chromosome 4L"/>
</dbReference>
<dbReference type="Bgee" id="447354">
    <property type="expression patterns" value="Expressed in muscle tissue and 19 other cell types or tissues"/>
</dbReference>
<dbReference type="GO" id="GO:0012505">
    <property type="term" value="C:endomembrane system"/>
    <property type="evidence" value="ECO:0000318"/>
    <property type="project" value="GO_Central"/>
</dbReference>
<dbReference type="GO" id="GO:0005576">
    <property type="term" value="C:extracellular region"/>
    <property type="evidence" value="ECO:0007669"/>
    <property type="project" value="UniProtKB-SubCell"/>
</dbReference>
<dbReference type="GO" id="GO:0005764">
    <property type="term" value="C:lysosome"/>
    <property type="evidence" value="ECO:0007669"/>
    <property type="project" value="UniProtKB-SubCell"/>
</dbReference>
<dbReference type="GO" id="GO:0008061">
    <property type="term" value="F:chitin binding"/>
    <property type="evidence" value="ECO:0007669"/>
    <property type="project" value="InterPro"/>
</dbReference>
<dbReference type="GO" id="GO:0070492">
    <property type="term" value="F:oligosaccharide binding"/>
    <property type="evidence" value="ECO:0000318"/>
    <property type="project" value="GO_Central"/>
</dbReference>
<dbReference type="GO" id="GO:0005975">
    <property type="term" value="P:carbohydrate metabolic process"/>
    <property type="evidence" value="ECO:0007669"/>
    <property type="project" value="InterPro"/>
</dbReference>
<dbReference type="CDD" id="cd02876">
    <property type="entry name" value="GH18_SI-CLP"/>
    <property type="match status" value="1"/>
</dbReference>
<dbReference type="FunFam" id="3.10.50.10:FF:000002">
    <property type="entry name" value="Chitinase domain-containing protein 1"/>
    <property type="match status" value="1"/>
</dbReference>
<dbReference type="FunFam" id="3.20.20.80:FF:000028">
    <property type="entry name" value="Chitinase domain-containing protein 1"/>
    <property type="match status" value="1"/>
</dbReference>
<dbReference type="Gene3D" id="3.10.50.10">
    <property type="match status" value="1"/>
</dbReference>
<dbReference type="Gene3D" id="1.10.8.360">
    <property type="entry name" value="3,6-anhydro-alpha-l-galactosidase"/>
    <property type="match status" value="1"/>
</dbReference>
<dbReference type="Gene3D" id="3.20.20.80">
    <property type="entry name" value="Glycosidases"/>
    <property type="match status" value="1"/>
</dbReference>
<dbReference type="InterPro" id="IPR011583">
    <property type="entry name" value="Chitinase_II/V-like_cat"/>
</dbReference>
<dbReference type="InterPro" id="IPR029070">
    <property type="entry name" value="Chitinase_insertion_sf"/>
</dbReference>
<dbReference type="InterPro" id="IPR001223">
    <property type="entry name" value="Glyco_hydro18_cat"/>
</dbReference>
<dbReference type="InterPro" id="IPR017853">
    <property type="entry name" value="Glycoside_hydrolase_SF"/>
</dbReference>
<dbReference type="PANTHER" id="PTHR46066:SF2">
    <property type="entry name" value="CHITINASE DOMAIN-CONTAINING PROTEIN 1"/>
    <property type="match status" value="1"/>
</dbReference>
<dbReference type="PANTHER" id="PTHR46066">
    <property type="entry name" value="CHITINASE DOMAIN-CONTAINING PROTEIN 1 FAMILY MEMBER"/>
    <property type="match status" value="1"/>
</dbReference>
<dbReference type="Pfam" id="PF00704">
    <property type="entry name" value="Glyco_hydro_18"/>
    <property type="match status" value="1"/>
</dbReference>
<dbReference type="SMART" id="SM00636">
    <property type="entry name" value="Glyco_18"/>
    <property type="match status" value="1"/>
</dbReference>
<dbReference type="SUPFAM" id="SSF51445">
    <property type="entry name" value="(Trans)glycosidases"/>
    <property type="match status" value="1"/>
</dbReference>
<dbReference type="PROSITE" id="PS51910">
    <property type="entry name" value="GH18_2"/>
    <property type="match status" value="1"/>
</dbReference>
<name>CHID1_XENLA</name>
<evidence type="ECO:0000250" key="1"/>
<evidence type="ECO:0000255" key="2"/>
<evidence type="ECO:0000255" key="3">
    <source>
        <dbReference type="PROSITE-ProRule" id="PRU01258"/>
    </source>
</evidence>
<evidence type="ECO:0000305" key="4"/>
<proteinExistence type="evidence at transcript level"/>
<gene>
    <name type="primary">chid1</name>
</gene>
<protein>
    <recommendedName>
        <fullName>Chitinase domain-containing protein 1</fullName>
    </recommendedName>
</protein>
<reference key="1">
    <citation type="submission" date="2004-08" db="EMBL/GenBank/DDBJ databases">
        <authorList>
            <consortium name="NIH - Xenopus Gene Collection (XGC) project"/>
        </authorList>
    </citation>
    <scope>NUCLEOTIDE SEQUENCE [LARGE SCALE MRNA]</scope>
    <source>
        <tissue>Brain</tissue>
    </source>
</reference>
<comment type="subcellular location">
    <subcellularLocation>
        <location>Secreted</location>
    </subcellularLocation>
    <subcellularLocation>
        <location evidence="1">Lysosome</location>
    </subcellularLocation>
</comment>
<comment type="similarity">
    <text evidence="4">Belongs to the glycosyl hydrolase 18 family.</text>
</comment>
<sequence length="393" mass="44310">MRLLSTLLLVATTYPLISATLSKTDSKKAASKAPETKTRLSDTSVQSRGLVSTDVKAKDIVLEHRSYCAKKLKERHVSADVLGYVTPWNGHGYDIAKTFAAKFTLISSVWLQIRRKGREAYQVTGLHDVDQGWIKDIRKTSKSTQIVPRILFDGWSYQDFESVFNSEDEIEELAGAMVQTAKDEHFDGFVVEVWSQLGGQKRQELVHLLIHIGEALHSAKLHFILVIPPAVAPGTDQLGMFGRKEFDQLAPVVDSFSLMTYDYSSPQRPGPNSPISWVQACVQLLDPESKWRKKILLGLHFYGMDYSALGATGEPILGNRYVEILKEHKPKLLWDQQIAEHYLEYKKNKGGKHAVFYPTLKSIQVRLDLAEELGTGIAIWELGQGLDYFYDLL</sequence>
<keyword id="KW-0458">Lysosome</keyword>
<keyword id="KW-1185">Reference proteome</keyword>
<keyword id="KW-0964">Secreted</keyword>
<keyword id="KW-0732">Signal</keyword>